<proteinExistence type="uncertain"/>
<evidence type="ECO:0000305" key="1"/>
<evidence type="ECO:0000305" key="2">
    <source>
    </source>
</evidence>
<protein>
    <recommendedName>
        <fullName>Putative uncharacterized protein YMR013W-A</fullName>
    </recommendedName>
</protein>
<feature type="chain" id="PRO_0000309050" description="Putative uncharacterized protein YMR013W-A">
    <location>
        <begin position="1"/>
        <end position="26"/>
    </location>
</feature>
<name>YM013_YEAST</name>
<accession>P0C5Q2</accession>
<comment type="miscellaneous">
    <text evidence="1">Completely overlaps snoRNA gene snR73.</text>
</comment>
<comment type="caution">
    <text evidence="2">Product of a dubious gene prediction unlikely to encode a functional protein. Because of that it is not part of the S.cerevisiae S288c complete/reference proteome set.</text>
</comment>
<reference key="1">
    <citation type="journal article" date="1997" name="Nature">
        <title>The nucleotide sequence of Saccharomyces cerevisiae chromosome XIII.</title>
        <authorList>
            <person name="Bowman S."/>
            <person name="Churcher C.M."/>
            <person name="Badcock K."/>
            <person name="Brown D."/>
            <person name="Chillingworth T."/>
            <person name="Connor R."/>
            <person name="Dedman K."/>
            <person name="Devlin K."/>
            <person name="Gentles S."/>
            <person name="Hamlin N."/>
            <person name="Hunt S."/>
            <person name="Jagels K."/>
            <person name="Lye G."/>
            <person name="Moule S."/>
            <person name="Odell C."/>
            <person name="Pearson D."/>
            <person name="Rajandream M.A."/>
            <person name="Rice P."/>
            <person name="Skelton J."/>
            <person name="Walsh S.V."/>
            <person name="Whitehead S."/>
            <person name="Barrell B.G."/>
        </authorList>
    </citation>
    <scope>NUCLEOTIDE SEQUENCE [LARGE SCALE GENOMIC DNA]</scope>
    <source>
        <strain>ATCC 204508 / S288c</strain>
    </source>
</reference>
<reference key="2">
    <citation type="journal article" date="2014" name="G3 (Bethesda)">
        <title>The reference genome sequence of Saccharomyces cerevisiae: Then and now.</title>
        <authorList>
            <person name="Engel S.R."/>
            <person name="Dietrich F.S."/>
            <person name="Fisk D.G."/>
            <person name="Binkley G."/>
            <person name="Balakrishnan R."/>
            <person name="Costanzo M.C."/>
            <person name="Dwight S.S."/>
            <person name="Hitz B.C."/>
            <person name="Karra K."/>
            <person name="Nash R.S."/>
            <person name="Weng S."/>
            <person name="Wong E.D."/>
            <person name="Lloyd P."/>
            <person name="Skrzypek M.S."/>
            <person name="Miyasato S.R."/>
            <person name="Simison M."/>
            <person name="Cherry J.M."/>
        </authorList>
    </citation>
    <scope>GENOME REANNOTATION</scope>
    <source>
        <strain>ATCC 204508 / S288c</strain>
    </source>
</reference>
<reference key="3">
    <citation type="journal article" date="2000" name="FEBS Lett.">
        <title>Genomic exploration of the hemiascomycetous yeasts: 4. The genome of Saccharomyces cerevisiae revisited.</title>
        <authorList>
            <person name="Blandin G."/>
            <person name="Durrens P."/>
            <person name="Tekaia F."/>
            <person name="Aigle M."/>
            <person name="Bolotin-Fukuhara M."/>
            <person name="Bon E."/>
            <person name="Casaregola S."/>
            <person name="de Montigny J."/>
            <person name="Gaillardin C."/>
            <person name="Lepingle A."/>
            <person name="Llorente B."/>
            <person name="Malpertuy A."/>
            <person name="Neuveglise C."/>
            <person name="Ozier-Kalogeropoulos O."/>
            <person name="Perrin A."/>
            <person name="Potier S."/>
            <person name="Souciet J.-L."/>
            <person name="Talla E."/>
            <person name="Toffano-Nioche C."/>
            <person name="Wesolowski-Louvel M."/>
            <person name="Marck C."/>
            <person name="Dujon B."/>
        </authorList>
    </citation>
    <scope>GENOME REANNOTATION</scope>
</reference>
<dbReference type="EMBL" id="Z49211">
    <property type="status" value="NOT_ANNOTATED_CDS"/>
    <property type="molecule type" value="Genomic_DNA"/>
</dbReference>
<dbReference type="STRING" id="4932.YMR013W-A"/>
<dbReference type="PaxDb" id="4932-YMR013W-A"/>
<dbReference type="EnsemblFungi" id="YMR013W-A_mRNA">
    <property type="protein sequence ID" value="YMR013W-A"/>
    <property type="gene ID" value="YMR013W-A"/>
</dbReference>
<dbReference type="AGR" id="SGD:S000007622"/>
<dbReference type="SGD" id="S000007622">
    <property type="gene designation" value="YMR013W-A"/>
</dbReference>
<dbReference type="HOGENOM" id="CLU_3417330_0_0_1"/>
<organism>
    <name type="scientific">Saccharomyces cerevisiae (strain ATCC 204508 / S288c)</name>
    <name type="common">Baker's yeast</name>
    <dbReference type="NCBI Taxonomy" id="559292"/>
    <lineage>
        <taxon>Eukaryota</taxon>
        <taxon>Fungi</taxon>
        <taxon>Dikarya</taxon>
        <taxon>Ascomycota</taxon>
        <taxon>Saccharomycotina</taxon>
        <taxon>Saccharomycetes</taxon>
        <taxon>Saccharomycetales</taxon>
        <taxon>Saccharomycetaceae</taxon>
        <taxon>Saccharomyces</taxon>
    </lineage>
</organism>
<gene>
    <name type="ordered locus">YMR013W-A</name>
</gene>
<sequence length="26" mass="3191">MMISTFHDGQLRFSNVYRLTLMIFRL</sequence>